<evidence type="ECO:0000255" key="1"/>
<evidence type="ECO:0000269" key="2">
    <source>
    </source>
</evidence>
<evidence type="ECO:0000305" key="3"/>
<name>ORF5A_EAVBU</name>
<reference key="1">
    <citation type="journal article" date="1991" name="J. Virol.">
        <title>Equine arteritis virus is not a togavirus but belongs to the coronaviruslike superfamily.</title>
        <authorList>
            <person name="den Boon J.A."/>
            <person name="Snijder E.J."/>
            <person name="Chirnside E.D."/>
            <person name="de Vries A.A.F."/>
            <person name="Horzinek M.C."/>
            <person name="Spaan W.J.M."/>
        </authorList>
    </citation>
    <scope>NUCLEOTIDE SEQUENCE [GENOMIC RNA]</scope>
</reference>
<reference key="2">
    <citation type="journal article" date="2011" name="J. Gen. Virol.">
        <title>Discovery of a small arterivirus gene that overlaps the GP5 coding sequence and is important for virus production.</title>
        <authorList>
            <person name="Firth A.E."/>
            <person name="Zevenhoven-Dobbe J.C."/>
            <person name="Wills N.M."/>
            <person name="Go Y.Y."/>
            <person name="Balasuriya U.B."/>
            <person name="Atkins J.F."/>
            <person name="Snijder E.J."/>
            <person name="Posthuma C.C."/>
        </authorList>
    </citation>
    <scope>IDENTIFICATION</scope>
    <scope>DISRUPTION PHENOTYPE</scope>
</reference>
<comment type="subcellular location">
    <subcellularLocation>
        <location evidence="3">Membrane</location>
        <topology evidence="3">Single-pass type III membrane protein</topology>
    </subcellularLocation>
</comment>
<comment type="alternative products">
    <event type="alternative initiation"/>
    <isoform>
        <id>P0DJX9-1</id>
        <name>ORF5a</name>
        <name>Protein ORF5a</name>
        <sequence type="displayed"/>
    </isoform>
    <isoform>
        <id>P28995-1</id>
        <name>GP5</name>
        <name>Glycoprotein 5</name>
        <sequence type="external"/>
    </isoform>
</comment>
<comment type="disruption phenotype">
    <text evidence="2">Knockout mutants displays reduced infectivity.</text>
</comment>
<organism>
    <name type="scientific">Equine arteritis virus (strain Bucyrus)</name>
    <name type="common">EAV</name>
    <dbReference type="NCBI Taxonomy" id="299386"/>
    <lineage>
        <taxon>Viruses</taxon>
        <taxon>Riboviria</taxon>
        <taxon>Orthornavirae</taxon>
        <taxon>Pisuviricota</taxon>
        <taxon>Pisoniviricetes</taxon>
        <taxon>Nidovirales</taxon>
        <taxon>Arnidovirineae</taxon>
        <taxon>Arteriviridae</taxon>
        <taxon>Equarterivirinae</taxon>
        <taxon>Alphaarterivirus</taxon>
        <taxon>Alphaarterivirus equid</taxon>
    </lineage>
</organism>
<accession>P0DJX9</accession>
<feature type="chain" id="PRO_0000423160" description="Protein ORF5a">
    <location>
        <begin position="1"/>
        <end position="59"/>
    </location>
</feature>
<feature type="transmembrane region" description="Helical; Signal-anchor for type III membrane protein" evidence="1">
    <location>
        <begin position="13"/>
        <end position="33"/>
    </location>
</feature>
<dbReference type="EMBL" id="X53459">
    <property type="status" value="NOT_ANNOTATED_CDS"/>
    <property type="molecule type" value="Genomic_RNA"/>
</dbReference>
<dbReference type="SMR" id="P0DJX9"/>
<dbReference type="Proteomes" id="UP000000353">
    <property type="component" value="Segment"/>
</dbReference>
<dbReference type="GO" id="GO:0016020">
    <property type="term" value="C:membrane"/>
    <property type="evidence" value="ECO:0007669"/>
    <property type="project" value="UniProtKB-SubCell"/>
</dbReference>
<proteinExistence type="predicted"/>
<gene>
    <name type="primary">GP5</name>
    <name type="ORF">5a</name>
</gene>
<sequence>MFFYDWYVGLNDVIYDCIAILALGCAITCLLLILHRSALHRLHLVYADGSRRYCQFAAI</sequence>
<organismHost>
    <name type="scientific">Equidae</name>
    <name type="common">horses</name>
    <dbReference type="NCBI Taxonomy" id="9788"/>
</organismHost>
<keyword id="KW-0024">Alternative initiation</keyword>
<keyword id="KW-0472">Membrane</keyword>
<keyword id="KW-1185">Reference proteome</keyword>
<keyword id="KW-0735">Signal-anchor</keyword>
<keyword id="KW-0812">Transmembrane</keyword>
<keyword id="KW-1133">Transmembrane helix</keyword>
<protein>
    <recommendedName>
        <fullName>Protein ORF5a</fullName>
    </recommendedName>
</protein>